<accession>Q11CT7</accession>
<sequence length="313" mass="33735">MNMIRTAMLLAFMTALFMAVGYLIGGSGGMMIALVIAAAMNLFSYWNADKMVLRMHHAVEVDERSAPEYYRIVSDLAQRAGLPMPRVYVIDNPQPNAFATGRNPQNAAVAATTGLLHSLTPEEVAGVMAHELAHVQNRDTLTMTITATLAGAISMLGNFAFFFGGNRDNNNPFGFIGILVAMIVAPLAAMVVQMAISRTREYAADRRGAEICGQPLWLASALAKISRAAHRVVNVDAERNPATAHLFIINPLSGQRMDNLFSTHPNTENRIAALQAMAGEFGNAPPASLREDEPGADGPWGRSASRARKGPWS</sequence>
<protein>
    <recommendedName>
        <fullName evidence="1">Protease HtpX homolog</fullName>
        <ecNumber evidence="1">3.4.24.-</ecNumber>
    </recommendedName>
</protein>
<feature type="chain" id="PRO_1000020886" description="Protease HtpX homolog">
    <location>
        <begin position="1"/>
        <end position="313"/>
    </location>
</feature>
<feature type="transmembrane region" description="Helical" evidence="1">
    <location>
        <begin position="7"/>
        <end position="24"/>
    </location>
</feature>
<feature type="transmembrane region" description="Helical" evidence="1">
    <location>
        <begin position="29"/>
        <end position="46"/>
    </location>
</feature>
<feature type="transmembrane region" description="Helical" evidence="1">
    <location>
        <begin position="145"/>
        <end position="165"/>
    </location>
</feature>
<feature type="transmembrane region" description="Helical" evidence="1">
    <location>
        <begin position="172"/>
        <end position="192"/>
    </location>
</feature>
<feature type="region of interest" description="Disordered" evidence="2">
    <location>
        <begin position="282"/>
        <end position="313"/>
    </location>
</feature>
<feature type="active site" evidence="1">
    <location>
        <position position="131"/>
    </location>
</feature>
<feature type="binding site" evidence="1">
    <location>
        <position position="130"/>
    </location>
    <ligand>
        <name>Zn(2+)</name>
        <dbReference type="ChEBI" id="CHEBI:29105"/>
        <note>catalytic</note>
    </ligand>
</feature>
<feature type="binding site" evidence="1">
    <location>
        <position position="134"/>
    </location>
    <ligand>
        <name>Zn(2+)</name>
        <dbReference type="ChEBI" id="CHEBI:29105"/>
        <note>catalytic</note>
    </ligand>
</feature>
<feature type="binding site" evidence="1">
    <location>
        <position position="201"/>
    </location>
    <ligand>
        <name>Zn(2+)</name>
        <dbReference type="ChEBI" id="CHEBI:29105"/>
        <note>catalytic</note>
    </ligand>
</feature>
<gene>
    <name evidence="1" type="primary">htpX</name>
    <name type="ordered locus">Meso_3417</name>
</gene>
<keyword id="KW-0997">Cell inner membrane</keyword>
<keyword id="KW-1003">Cell membrane</keyword>
<keyword id="KW-0378">Hydrolase</keyword>
<keyword id="KW-0472">Membrane</keyword>
<keyword id="KW-0479">Metal-binding</keyword>
<keyword id="KW-0482">Metalloprotease</keyword>
<keyword id="KW-0645">Protease</keyword>
<keyword id="KW-0812">Transmembrane</keyword>
<keyword id="KW-1133">Transmembrane helix</keyword>
<keyword id="KW-0862">Zinc</keyword>
<proteinExistence type="inferred from homology"/>
<name>HTPX_CHESB</name>
<organism>
    <name type="scientific">Chelativorans sp. (strain BNC1)</name>
    <dbReference type="NCBI Taxonomy" id="266779"/>
    <lineage>
        <taxon>Bacteria</taxon>
        <taxon>Pseudomonadati</taxon>
        <taxon>Pseudomonadota</taxon>
        <taxon>Alphaproteobacteria</taxon>
        <taxon>Hyphomicrobiales</taxon>
        <taxon>Phyllobacteriaceae</taxon>
        <taxon>Chelativorans</taxon>
    </lineage>
</organism>
<dbReference type="EC" id="3.4.24.-" evidence="1"/>
<dbReference type="EMBL" id="CP000390">
    <property type="protein sequence ID" value="ABG64788.1"/>
    <property type="molecule type" value="Genomic_DNA"/>
</dbReference>
<dbReference type="SMR" id="Q11CT7"/>
<dbReference type="STRING" id="266779.Meso_3417"/>
<dbReference type="KEGG" id="mes:Meso_3417"/>
<dbReference type="eggNOG" id="COG0501">
    <property type="taxonomic scope" value="Bacteria"/>
</dbReference>
<dbReference type="HOGENOM" id="CLU_042266_3_0_5"/>
<dbReference type="OrthoDB" id="15218at2"/>
<dbReference type="GO" id="GO:0005886">
    <property type="term" value="C:plasma membrane"/>
    <property type="evidence" value="ECO:0007669"/>
    <property type="project" value="UniProtKB-SubCell"/>
</dbReference>
<dbReference type="GO" id="GO:0004222">
    <property type="term" value="F:metalloendopeptidase activity"/>
    <property type="evidence" value="ECO:0007669"/>
    <property type="project" value="UniProtKB-UniRule"/>
</dbReference>
<dbReference type="GO" id="GO:0008270">
    <property type="term" value="F:zinc ion binding"/>
    <property type="evidence" value="ECO:0007669"/>
    <property type="project" value="UniProtKB-UniRule"/>
</dbReference>
<dbReference type="GO" id="GO:0006508">
    <property type="term" value="P:proteolysis"/>
    <property type="evidence" value="ECO:0007669"/>
    <property type="project" value="UniProtKB-KW"/>
</dbReference>
<dbReference type="CDD" id="cd07336">
    <property type="entry name" value="M48B_HtpX_like"/>
    <property type="match status" value="1"/>
</dbReference>
<dbReference type="Gene3D" id="3.30.2010.10">
    <property type="entry name" value="Metalloproteases ('zincins'), catalytic domain"/>
    <property type="match status" value="1"/>
</dbReference>
<dbReference type="HAMAP" id="MF_00188">
    <property type="entry name" value="Pept_M48_protease_HtpX"/>
    <property type="match status" value="1"/>
</dbReference>
<dbReference type="InterPro" id="IPR050083">
    <property type="entry name" value="HtpX_protease"/>
</dbReference>
<dbReference type="InterPro" id="IPR022919">
    <property type="entry name" value="Pept_M48_protease_HtpX"/>
</dbReference>
<dbReference type="InterPro" id="IPR001915">
    <property type="entry name" value="Peptidase_M48"/>
</dbReference>
<dbReference type="NCBIfam" id="NF002363">
    <property type="entry name" value="PRK01345.1"/>
    <property type="match status" value="1"/>
</dbReference>
<dbReference type="NCBIfam" id="NF002826">
    <property type="entry name" value="PRK03001.1"/>
    <property type="match status" value="1"/>
</dbReference>
<dbReference type="PANTHER" id="PTHR43221">
    <property type="entry name" value="PROTEASE HTPX"/>
    <property type="match status" value="1"/>
</dbReference>
<dbReference type="PANTHER" id="PTHR43221:SF1">
    <property type="entry name" value="PROTEASE HTPX"/>
    <property type="match status" value="1"/>
</dbReference>
<dbReference type="Pfam" id="PF01435">
    <property type="entry name" value="Peptidase_M48"/>
    <property type="match status" value="1"/>
</dbReference>
<dbReference type="PROSITE" id="PS00142">
    <property type="entry name" value="ZINC_PROTEASE"/>
    <property type="match status" value="1"/>
</dbReference>
<evidence type="ECO:0000255" key="1">
    <source>
        <dbReference type="HAMAP-Rule" id="MF_00188"/>
    </source>
</evidence>
<evidence type="ECO:0000256" key="2">
    <source>
        <dbReference type="SAM" id="MobiDB-lite"/>
    </source>
</evidence>
<reference key="1">
    <citation type="submission" date="2006-06" db="EMBL/GenBank/DDBJ databases">
        <title>Complete sequence of chromosome of Mesorhizobium sp. BNC1.</title>
        <authorList>
            <consortium name="US DOE Joint Genome Institute"/>
            <person name="Copeland A."/>
            <person name="Lucas S."/>
            <person name="Lapidus A."/>
            <person name="Barry K."/>
            <person name="Detter J.C."/>
            <person name="Glavina del Rio T."/>
            <person name="Hammon N."/>
            <person name="Israni S."/>
            <person name="Dalin E."/>
            <person name="Tice H."/>
            <person name="Pitluck S."/>
            <person name="Chertkov O."/>
            <person name="Brettin T."/>
            <person name="Bruce D."/>
            <person name="Han C."/>
            <person name="Tapia R."/>
            <person name="Gilna P."/>
            <person name="Schmutz J."/>
            <person name="Larimer F."/>
            <person name="Land M."/>
            <person name="Hauser L."/>
            <person name="Kyrpides N."/>
            <person name="Mikhailova N."/>
            <person name="Richardson P."/>
        </authorList>
    </citation>
    <scope>NUCLEOTIDE SEQUENCE [LARGE SCALE GENOMIC DNA]</scope>
    <source>
        <strain>BNC1</strain>
    </source>
</reference>
<comment type="cofactor">
    <cofactor evidence="1">
        <name>Zn(2+)</name>
        <dbReference type="ChEBI" id="CHEBI:29105"/>
    </cofactor>
    <text evidence="1">Binds 1 zinc ion per subunit.</text>
</comment>
<comment type="subcellular location">
    <subcellularLocation>
        <location evidence="1">Cell inner membrane</location>
        <topology evidence="1">Multi-pass membrane protein</topology>
    </subcellularLocation>
</comment>
<comment type="similarity">
    <text evidence="1">Belongs to the peptidase M48B family.</text>
</comment>